<protein>
    <recommendedName>
        <fullName>Accessory gland-specific peptide 26Ab</fullName>
    </recommendedName>
    <alternativeName>
        <fullName>Male accessory gland secretory protein 355B</fullName>
    </alternativeName>
</protein>
<feature type="signal peptide" evidence="1">
    <location>
        <begin position="1"/>
        <end position="21"/>
    </location>
</feature>
<feature type="chain" id="PRO_0000021761" description="Accessory gland-specific peptide 26Ab">
    <location>
        <begin position="22"/>
        <end position="90"/>
    </location>
</feature>
<reference key="1">
    <citation type="journal article" date="1992" name="Genetics">
        <title>Polymorphism and divergence in the Mst26A male accessory gland gene region in Drosophila.</title>
        <authorList>
            <person name="Aguade M."/>
            <person name="Miyashita N."/>
            <person name="Langley C.H."/>
        </authorList>
    </citation>
    <scope>NUCLEOTIDE SEQUENCE [GENOMIC DNA]</scope>
    <source>
        <strain>PC</strain>
    </source>
</reference>
<name>MS2B_DROSI</name>
<comment type="function">
    <text>This protein is transferred from male to female during mating and may affect egglaying and behavior after mating.</text>
</comment>
<comment type="subcellular location">
    <subcellularLocation>
        <location>Secreted</location>
        <location>Extracellular space</location>
    </subcellularLocation>
</comment>
<comment type="tissue specificity">
    <text>Main cells of the accessory glands of males.</text>
</comment>
<gene>
    <name type="primary">Acp26Ab</name>
    <name type="synonym">Mst26Ab</name>
    <name type="synonym">mst355B</name>
</gene>
<organism>
    <name type="scientific">Drosophila simulans</name>
    <name type="common">Fruit fly</name>
    <dbReference type="NCBI Taxonomy" id="7240"/>
    <lineage>
        <taxon>Eukaryota</taxon>
        <taxon>Metazoa</taxon>
        <taxon>Ecdysozoa</taxon>
        <taxon>Arthropoda</taxon>
        <taxon>Hexapoda</taxon>
        <taxon>Insecta</taxon>
        <taxon>Pterygota</taxon>
        <taxon>Neoptera</taxon>
        <taxon>Endopterygota</taxon>
        <taxon>Diptera</taxon>
        <taxon>Brachycera</taxon>
        <taxon>Muscomorpha</taxon>
        <taxon>Ephydroidea</taxon>
        <taxon>Drosophilidae</taxon>
        <taxon>Drosophila</taxon>
        <taxon>Sophophora</taxon>
    </lineage>
</organism>
<accession>P33740</accession>
<proteinExistence type="evidence at transcript level"/>
<dbReference type="EMBL" id="X70899">
    <property type="protein sequence ID" value="CAA50255.1"/>
    <property type="molecule type" value="Genomic_DNA"/>
</dbReference>
<dbReference type="PIR" id="S30430">
    <property type="entry name" value="S30430"/>
</dbReference>
<dbReference type="OrthoDB" id="7860727at2759"/>
<dbReference type="GO" id="GO:0005576">
    <property type="term" value="C:extracellular region"/>
    <property type="evidence" value="ECO:0007669"/>
    <property type="project" value="UniProtKB-SubCell"/>
</dbReference>
<dbReference type="GO" id="GO:0007617">
    <property type="term" value="P:mating behavior"/>
    <property type="evidence" value="ECO:0007669"/>
    <property type="project" value="InterPro"/>
</dbReference>
<dbReference type="GO" id="GO:0019953">
    <property type="term" value="P:sexual reproduction"/>
    <property type="evidence" value="ECO:0007669"/>
    <property type="project" value="EnsemblMetazoa"/>
</dbReference>
<dbReference type="InterPro" id="IPR008392">
    <property type="entry name" value="Acp26Ab"/>
</dbReference>
<dbReference type="Pfam" id="PF05777">
    <property type="entry name" value="Acp26Ab"/>
    <property type="match status" value="1"/>
</dbReference>
<evidence type="ECO:0000255" key="1"/>
<keyword id="KW-0085">Behavior</keyword>
<keyword id="KW-0964">Secreted</keyword>
<keyword id="KW-0732">Signal</keyword>
<sequence>MNYFAVLCIFSCICFWQFSDAAPFISVQSSSQARSQKVMNGMLRTLYDYSVQDSVNDATGHLIHTHKADFNSDVMSPDEIESVRQQLNMA</sequence>